<gene>
    <name type="primary">GAGE5</name>
</gene>
<evidence type="ECO:0000256" key="1">
    <source>
        <dbReference type="SAM" id="MobiDB-lite"/>
    </source>
</evidence>
<evidence type="ECO:0000305" key="2"/>
<proteinExistence type="evidence at protein level"/>
<accession>Q13069</accession>
<accession>Q6FG72</accession>
<comment type="interaction">
    <interactant intactId="EBI-745702">
        <id>Q13069</id>
    </interactant>
    <interactant intactId="EBI-10172181">
        <id>Q53SE7</id>
        <label>FLJ13057</label>
    </interactant>
    <organismsDiffer>false</organismsDiffer>
    <experiments>3</experiments>
</comment>
<comment type="interaction">
    <interactant intactId="EBI-745702">
        <id>Q13069</id>
    </interactant>
    <interactant intactId="EBI-2548508">
        <id>Q96IK5</id>
        <label>GMCL1</label>
    </interactant>
    <organismsDiffer>false</organismsDiffer>
    <experiments>6</experiments>
</comment>
<comment type="interaction">
    <interactant intactId="EBI-745702">
        <id>Q13069</id>
    </interactant>
    <interactant intactId="EBI-745707">
        <id>Q8NEA9</id>
        <label>GMCL2</label>
    </interactant>
    <organismsDiffer>false</organismsDiffer>
    <experiments>4</experiments>
</comment>
<comment type="interaction">
    <interactant intactId="EBI-745702">
        <id>Q13069</id>
    </interactant>
    <interactant intactId="EBI-750109">
        <id>Q9NYB0</id>
        <label>TERF2IP</label>
    </interactant>
    <organismsDiffer>false</organismsDiffer>
    <experiments>2</experiments>
</comment>
<comment type="tissue specificity">
    <text>Expressed in a variety of tumor tissues but not in normal tissues, except testis.</text>
</comment>
<comment type="miscellaneous">
    <text>This gene belongs to a family of genes organized in clustered repeats. They have a high degree of predicted sequence identity, but differ by scattered single nucleotide substitution. Their sequences contain either the antigenic peptide YYWPRPRRY or YRPRPRRY which is recognized by cytotoxic T-cells.</text>
</comment>
<comment type="similarity">
    <text evidence="2">Belongs to the GAGE family.</text>
</comment>
<comment type="caution">
    <text evidence="2">The first GAGE nomenclature was based on identified mRNA sequences, but the high identity of the GAGE members made impossible to separate products of paralogous genes from polymorph products. PubMed:18179644 presented a new GAGE gene nomenclature based on the identified genes and their products.</text>
</comment>
<organism>
    <name type="scientific">Homo sapiens</name>
    <name type="common">Human</name>
    <dbReference type="NCBI Taxonomy" id="9606"/>
    <lineage>
        <taxon>Eukaryota</taxon>
        <taxon>Metazoa</taxon>
        <taxon>Chordata</taxon>
        <taxon>Craniata</taxon>
        <taxon>Vertebrata</taxon>
        <taxon>Euteleostomi</taxon>
        <taxon>Mammalia</taxon>
        <taxon>Eutheria</taxon>
        <taxon>Euarchontoglires</taxon>
        <taxon>Primates</taxon>
        <taxon>Haplorrhini</taxon>
        <taxon>Catarrhini</taxon>
        <taxon>Hominidae</taxon>
        <taxon>Homo</taxon>
    </lineage>
</organism>
<dbReference type="EMBL" id="U19146">
    <property type="protein sequence ID" value="AAA82748.1"/>
    <property type="molecule type" value="mRNA"/>
</dbReference>
<dbReference type="EMBL" id="CR542236">
    <property type="protein sequence ID" value="CAG47032.1"/>
    <property type="molecule type" value="mRNA"/>
</dbReference>
<dbReference type="EMBL" id="BC024914">
    <property type="protein sequence ID" value="AAH24914.1"/>
    <property type="molecule type" value="mRNA"/>
</dbReference>
<dbReference type="RefSeq" id="NP_001466.1">
    <property type="nucleotide sequence ID" value="NM_001475.1"/>
</dbReference>
<dbReference type="BioGRID" id="108850">
    <property type="interactions" value="51"/>
</dbReference>
<dbReference type="IntAct" id="Q13069">
    <property type="interactions" value="51"/>
</dbReference>
<dbReference type="MINT" id="Q13069"/>
<dbReference type="iPTMnet" id="Q13069"/>
<dbReference type="PhosphoSitePlus" id="Q13069"/>
<dbReference type="BioMuta" id="HGNC:4102"/>
<dbReference type="jPOST" id="Q13069"/>
<dbReference type="MassIVE" id="Q13069"/>
<dbReference type="PeptideAtlas" id="Q13069"/>
<dbReference type="Pumba" id="Q13069"/>
<dbReference type="TopDownProteomics" id="Q13069"/>
<dbReference type="DNASU" id="2576"/>
<dbReference type="GeneID" id="2577"/>
<dbReference type="KEGG" id="hsa:2576"/>
<dbReference type="KEGG" id="hsa:2577"/>
<dbReference type="AGR" id="HGNC:4101"/>
<dbReference type="AGR" id="HGNC:4102"/>
<dbReference type="CTD" id="2576"/>
<dbReference type="CTD" id="2577"/>
<dbReference type="GeneCards" id="GAGE5"/>
<dbReference type="HGNC" id="HGNC:4102">
    <property type="gene designation" value="GAGE5"/>
</dbReference>
<dbReference type="MIM" id="300598">
    <property type="type" value="gene"/>
</dbReference>
<dbReference type="neXtProt" id="NX_Q13069"/>
<dbReference type="PharmGKB" id="PA28517"/>
<dbReference type="eggNOG" id="ENOG502SZ68">
    <property type="taxonomic scope" value="Eukaryota"/>
</dbReference>
<dbReference type="InParanoid" id="Q13069"/>
<dbReference type="OrthoDB" id="17580at9604"/>
<dbReference type="PAN-GO" id="Q13069">
    <property type="GO annotations" value="0 GO annotations based on evolutionary models"/>
</dbReference>
<dbReference type="PathwayCommons" id="Q13069"/>
<dbReference type="SignaLink" id="Q13069"/>
<dbReference type="BioGRID-ORCS" id="2576">
    <property type="hits" value="1 hit in 12 CRISPR screens"/>
</dbReference>
<dbReference type="BioGRID-ORCS" id="2577">
    <property type="hits" value="1 hit in 21 CRISPR screens"/>
</dbReference>
<dbReference type="Pharos" id="Q13069">
    <property type="development level" value="Tdark"/>
</dbReference>
<dbReference type="PRO" id="PR:Q13069"/>
<dbReference type="Proteomes" id="UP000005640">
    <property type="component" value="Unplaced"/>
</dbReference>
<dbReference type="RNAct" id="Q13069">
    <property type="molecule type" value="protein"/>
</dbReference>
<dbReference type="InterPro" id="IPR031320">
    <property type="entry name" value="GAGE"/>
</dbReference>
<dbReference type="InterPro" id="IPR008625">
    <property type="entry name" value="GAGE_fam"/>
</dbReference>
<dbReference type="PANTHER" id="PTHR14047:SF30">
    <property type="entry name" value="G ANTIGEN 1-RELATED"/>
    <property type="match status" value="1"/>
</dbReference>
<dbReference type="PANTHER" id="PTHR14047">
    <property type="entry name" value="P ANTIGEN FAMILY MEMBER 5-RELATED"/>
    <property type="match status" value="1"/>
</dbReference>
<dbReference type="Pfam" id="PF05831">
    <property type="entry name" value="GAGE"/>
    <property type="match status" value="1"/>
</dbReference>
<dbReference type="SMART" id="SM01379">
    <property type="entry name" value="GAGE"/>
    <property type="match status" value="1"/>
</dbReference>
<sequence length="117" mass="12924">MSWRGRSTYYWPRPRRYVQPPEVIGPMRPEQFSDEVEPATPEEGEPATQRQDPAAAQEGEDEGASAGQGPKPEADSQEQGHPQTGCECEDGPDGQEMDPPNPEEVKTPEEGEKQSQC</sequence>
<protein>
    <recommendedName>
        <fullName>G antigen 5</fullName>
        <shortName>GAGE-5</shortName>
    </recommendedName>
    <alternativeName>
        <fullName>Cancer/testis antigen 4.5</fullName>
        <shortName>CT4.5</shortName>
    </alternativeName>
</protein>
<reference key="1">
    <citation type="journal article" date="1995" name="J. Exp. Med.">
        <title>A new family of genes coding for an antigen recognized by autologous cytolytic T lymphocytes on a human melanoma.</title>
        <authorList>
            <person name="van den Eynde B."/>
            <person name="Peeters O."/>
            <person name="de Backer O."/>
            <person name="Gaugler B."/>
            <person name="Lucas S."/>
            <person name="Boon T."/>
        </authorList>
    </citation>
    <scope>NUCLEOTIDE SEQUENCE [MRNA]</scope>
    <source>
        <tissue>Melanoma</tissue>
    </source>
</reference>
<reference key="2">
    <citation type="submission" date="2004-06" db="EMBL/GenBank/DDBJ databases">
        <title>Cloning of human full open reading frames in Gateway(TM) system entry vector (pDONR201).</title>
        <authorList>
            <person name="Halleck A."/>
            <person name="Ebert L."/>
            <person name="Mkoundinya M."/>
            <person name="Schick M."/>
            <person name="Eisenstein S."/>
            <person name="Neubert P."/>
            <person name="Kstrang K."/>
            <person name="Schatten R."/>
            <person name="Shen B."/>
            <person name="Henze S."/>
            <person name="Mar W."/>
            <person name="Korn B."/>
            <person name="Zuo D."/>
            <person name="Hu Y."/>
            <person name="LaBaer J."/>
        </authorList>
    </citation>
    <scope>NUCLEOTIDE SEQUENCE [LARGE SCALE MRNA]</scope>
</reference>
<reference key="3">
    <citation type="journal article" date="2004" name="Genome Res.">
        <title>The status, quality, and expansion of the NIH full-length cDNA project: the Mammalian Gene Collection (MGC).</title>
        <authorList>
            <consortium name="The MGC Project Team"/>
        </authorList>
    </citation>
    <scope>NUCLEOTIDE SEQUENCE [LARGE SCALE MRNA]</scope>
    <source>
        <tissue>Liver</tissue>
    </source>
</reference>
<reference key="4">
    <citation type="journal article" date="1999" name="Cancer Res.">
        <title>Characterization of the GAGE genes that are expressed in various human cancers and in normal testis.</title>
        <authorList>
            <person name="De Backer O."/>
            <person name="Arden K.C."/>
            <person name="Boretti M."/>
            <person name="Vantomme V."/>
            <person name="De Smet C."/>
            <person name="Czekay S."/>
            <person name="Viars C.S."/>
            <person name="De Plaen E."/>
            <person name="Brasseur F."/>
            <person name="Chomez P."/>
            <person name="Van den Eynde B."/>
            <person name="Boon T."/>
            <person name="van der Bruggen P."/>
        </authorList>
    </citation>
    <scope>CHARACTERIZATION OF ANTIGENIC PEPTIDES</scope>
</reference>
<reference key="5">
    <citation type="journal article" date="2008" name="Tissue Antigens">
        <title>An overview of the GAGE cancer/testis antigen family with the inclusion of newly identified members.</title>
        <authorList>
            <person name="Gjerstorff M.F."/>
            <person name="Ditzel H.J."/>
        </authorList>
    </citation>
    <scope>GAGE FAMILY</scope>
</reference>
<keyword id="KW-1185">Reference proteome</keyword>
<feature type="chain" id="PRO_0000148343" description="G antigen 5">
    <location>
        <begin position="1"/>
        <end position="117"/>
    </location>
</feature>
<feature type="region of interest" description="Disordered" evidence="1">
    <location>
        <begin position="1"/>
        <end position="117"/>
    </location>
</feature>
<feature type="compositionally biased region" description="Acidic residues" evidence="1">
    <location>
        <begin position="32"/>
        <end position="45"/>
    </location>
</feature>
<feature type="compositionally biased region" description="Acidic residues" evidence="1">
    <location>
        <begin position="87"/>
        <end position="96"/>
    </location>
</feature>
<feature type="compositionally biased region" description="Basic and acidic residues" evidence="1">
    <location>
        <begin position="103"/>
        <end position="117"/>
    </location>
</feature>
<feature type="sequence conflict" description="In Ref. 2; CAG47032." evidence="2" ref="2">
    <original>V</original>
    <variation>M</variation>
    <location>
        <position position="23"/>
    </location>
</feature>
<name>GAGE5_HUMAN</name>